<keyword id="KW-0002">3D-structure</keyword>
<keyword id="KW-0469">Meiosis</keyword>
<keyword id="KW-0472">Membrane</keyword>
<keyword id="KW-0539">Nucleus</keyword>
<keyword id="KW-0597">Phosphoprotein</keyword>
<keyword id="KW-1185">Reference proteome</keyword>
<keyword id="KW-0812">Transmembrane</keyword>
<keyword id="KW-1133">Transmembrane helix</keyword>
<proteinExistence type="evidence at protein level"/>
<reference key="1">
    <citation type="journal article" date="2002" name="Nature">
        <title>The genome sequence of Schizosaccharomyces pombe.</title>
        <authorList>
            <person name="Wood V."/>
            <person name="Gwilliam R."/>
            <person name="Rajandream M.A."/>
            <person name="Lyne M.H."/>
            <person name="Lyne R."/>
            <person name="Stewart A."/>
            <person name="Sgouros J.G."/>
            <person name="Peat N."/>
            <person name="Hayles J."/>
            <person name="Baker S.G."/>
            <person name="Basham D."/>
            <person name="Bowman S."/>
            <person name="Brooks K."/>
            <person name="Brown D."/>
            <person name="Brown S."/>
            <person name="Chillingworth T."/>
            <person name="Churcher C.M."/>
            <person name="Collins M."/>
            <person name="Connor R."/>
            <person name="Cronin A."/>
            <person name="Davis P."/>
            <person name="Feltwell T."/>
            <person name="Fraser A."/>
            <person name="Gentles S."/>
            <person name="Goble A."/>
            <person name="Hamlin N."/>
            <person name="Harris D.E."/>
            <person name="Hidalgo J."/>
            <person name="Hodgson G."/>
            <person name="Holroyd S."/>
            <person name="Hornsby T."/>
            <person name="Howarth S."/>
            <person name="Huckle E.J."/>
            <person name="Hunt S."/>
            <person name="Jagels K."/>
            <person name="James K.D."/>
            <person name="Jones L."/>
            <person name="Jones M."/>
            <person name="Leather S."/>
            <person name="McDonald S."/>
            <person name="McLean J."/>
            <person name="Mooney P."/>
            <person name="Moule S."/>
            <person name="Mungall K.L."/>
            <person name="Murphy L.D."/>
            <person name="Niblett D."/>
            <person name="Odell C."/>
            <person name="Oliver K."/>
            <person name="O'Neil S."/>
            <person name="Pearson D."/>
            <person name="Quail M.A."/>
            <person name="Rabbinowitsch E."/>
            <person name="Rutherford K.M."/>
            <person name="Rutter S."/>
            <person name="Saunders D."/>
            <person name="Seeger K."/>
            <person name="Sharp S."/>
            <person name="Skelton J."/>
            <person name="Simmonds M.N."/>
            <person name="Squares R."/>
            <person name="Squares S."/>
            <person name="Stevens K."/>
            <person name="Taylor K."/>
            <person name="Taylor R.G."/>
            <person name="Tivey A."/>
            <person name="Walsh S.V."/>
            <person name="Warren T."/>
            <person name="Whitehead S."/>
            <person name="Woodward J.R."/>
            <person name="Volckaert G."/>
            <person name="Aert R."/>
            <person name="Robben J."/>
            <person name="Grymonprez B."/>
            <person name="Weltjens I."/>
            <person name="Vanstreels E."/>
            <person name="Rieger M."/>
            <person name="Schaefer M."/>
            <person name="Mueller-Auer S."/>
            <person name="Gabel C."/>
            <person name="Fuchs M."/>
            <person name="Duesterhoeft A."/>
            <person name="Fritzc C."/>
            <person name="Holzer E."/>
            <person name="Moestl D."/>
            <person name="Hilbert H."/>
            <person name="Borzym K."/>
            <person name="Langer I."/>
            <person name="Beck A."/>
            <person name="Lehrach H."/>
            <person name="Reinhardt R."/>
            <person name="Pohl T.M."/>
            <person name="Eger P."/>
            <person name="Zimmermann W."/>
            <person name="Wedler H."/>
            <person name="Wambutt R."/>
            <person name="Purnelle B."/>
            <person name="Goffeau A."/>
            <person name="Cadieu E."/>
            <person name="Dreano S."/>
            <person name="Gloux S."/>
            <person name="Lelaure V."/>
            <person name="Mottier S."/>
            <person name="Galibert F."/>
            <person name="Aves S.J."/>
            <person name="Xiang Z."/>
            <person name="Hunt C."/>
            <person name="Moore K."/>
            <person name="Hurst S.M."/>
            <person name="Lucas M."/>
            <person name="Rochet M."/>
            <person name="Gaillardin C."/>
            <person name="Tallada V.A."/>
            <person name="Garzon A."/>
            <person name="Thode G."/>
            <person name="Daga R.R."/>
            <person name="Cruzado L."/>
            <person name="Jimenez J."/>
            <person name="Sanchez M."/>
            <person name="del Rey F."/>
            <person name="Benito J."/>
            <person name="Dominguez A."/>
            <person name="Revuelta J.L."/>
            <person name="Moreno S."/>
            <person name="Armstrong J."/>
            <person name="Forsburg S.L."/>
            <person name="Cerutti L."/>
            <person name="Lowe T."/>
            <person name="McCombie W.R."/>
            <person name="Paulsen I."/>
            <person name="Potashkin J."/>
            <person name="Shpakovski G.V."/>
            <person name="Ussery D."/>
            <person name="Barrell B.G."/>
            <person name="Nurse P."/>
        </authorList>
    </citation>
    <scope>NUCLEOTIDE SEQUENCE [LARGE SCALE GENOMIC DNA]</scope>
    <source>
        <strain>972 / ATCC 24843</strain>
    </source>
</reference>
<reference key="2">
    <citation type="journal article" date="2006" name="Nat. Biotechnol.">
        <title>ORFeome cloning and global analysis of protein localization in the fission yeast Schizosaccharomyces pombe.</title>
        <authorList>
            <person name="Matsuyama A."/>
            <person name="Arai R."/>
            <person name="Yashiroda Y."/>
            <person name="Shirai A."/>
            <person name="Kamata A."/>
            <person name="Sekido S."/>
            <person name="Kobayashi Y."/>
            <person name="Hashimoto A."/>
            <person name="Hamamoto M."/>
            <person name="Hiraoka Y."/>
            <person name="Horinouchi S."/>
            <person name="Yoshida M."/>
        </authorList>
    </citation>
    <scope>SUBCELLULAR LOCATION [LARGE SCALE ANALYSIS]</scope>
</reference>
<reference key="3">
    <citation type="journal article" date="2008" name="Cell">
        <title>A network of nuclear envelope membrane proteins linking centromeres to microtubules.</title>
        <authorList>
            <person name="King M.C."/>
            <person name="Drivas T.G."/>
            <person name="Blobel G."/>
        </authorList>
    </citation>
    <scope>SUBCELLULAR LOCATION</scope>
</reference>
<reference key="4">
    <citation type="journal article" date="2008" name="J. Proteome Res.">
        <title>Phosphoproteome analysis of fission yeast.</title>
        <authorList>
            <person name="Wilson-Grady J.T."/>
            <person name="Villen J."/>
            <person name="Gygi S.P."/>
        </authorList>
    </citation>
    <scope>PHOSPHORYLATION [LARGE SCALE ANALYSIS] AT THR-683 AND SER-684</scope>
    <scope>IDENTIFICATION BY MASS SPECTROMETRY</scope>
</reference>
<reference key="5">
    <citation type="journal article" date="2010" name="Cell Cycle">
        <title>High-throughput knockout screen in Schizosaccharomyces pombe identifies a novel gene required for efficient homolog disjunction during meiosis I.</title>
        <authorList>
            <person name="Rumpf C."/>
            <person name="Cipak L."/>
            <person name="Novatchkova M."/>
            <person name="Li Z."/>
            <person name="Polakova S."/>
            <person name="Dudas A."/>
            <person name="Kovacikova I."/>
            <person name="Miadokova E."/>
            <person name="Ammerer G."/>
            <person name="Gregan J."/>
        </authorList>
    </citation>
    <scope>FUNCTION</scope>
</reference>
<reference key="6">
    <citation type="journal article" date="2017" name="Proc. Natl. Acad. Sci. U.S.A.">
        <title>LEM2 recruits CHMP7 for ESCRT-mediated nuclear envelope closure in fission yeast and human cells.</title>
        <authorList>
            <person name="Gu M."/>
            <person name="LaJoie D."/>
            <person name="Chen O.S."/>
            <person name="von Appen A."/>
            <person name="Ladinsky M.S."/>
            <person name="Redd M.J."/>
            <person name="Nikolova L."/>
            <person name="Bjorkman P.J."/>
            <person name="Sundquist W.I."/>
            <person name="Ullman K.S."/>
            <person name="Frost A."/>
        </authorList>
    </citation>
    <scope>FUNCTION</scope>
    <scope>DISRUPTION PHENOTYPE</scope>
</reference>
<protein>
    <recommendedName>
        <fullName>Lap-Emerin-Man domain protein 2</fullName>
        <shortName>LEM domain protein 2</shortName>
    </recommendedName>
</protein>
<dbReference type="EMBL" id="CU329670">
    <property type="protein sequence ID" value="CAA92388.1"/>
    <property type="molecule type" value="Genomic_DNA"/>
</dbReference>
<dbReference type="PIR" id="T37923">
    <property type="entry name" value="T37923"/>
</dbReference>
<dbReference type="RefSeq" id="NP_593673.1">
    <property type="nucleotide sequence ID" value="NM_001019105.2"/>
</dbReference>
<dbReference type="PDB" id="5YCA">
    <property type="method" value="X-ray"/>
    <property type="resolution" value="1.57 A"/>
    <property type="chains" value="C=261-279"/>
</dbReference>
<dbReference type="PDBsum" id="5YCA"/>
<dbReference type="SMR" id="Q10109"/>
<dbReference type="BioGRID" id="279001">
    <property type="interactions" value="182"/>
</dbReference>
<dbReference type="FunCoup" id="Q10109">
    <property type="interactions" value="41"/>
</dbReference>
<dbReference type="STRING" id="284812.Q10109"/>
<dbReference type="iPTMnet" id="Q10109"/>
<dbReference type="PaxDb" id="4896-SPAC18G6.10.1"/>
<dbReference type="EnsemblFungi" id="SPAC18G6.10.1">
    <property type="protein sequence ID" value="SPAC18G6.10.1:pep"/>
    <property type="gene ID" value="SPAC18G6.10"/>
</dbReference>
<dbReference type="GeneID" id="2542544"/>
<dbReference type="KEGG" id="spo:2542544"/>
<dbReference type="PomBase" id="SPAC18G6.10">
    <property type="gene designation" value="lem2"/>
</dbReference>
<dbReference type="VEuPathDB" id="FungiDB:SPAC18G6.10"/>
<dbReference type="HOGENOM" id="CLU_408346_0_0_1"/>
<dbReference type="InParanoid" id="Q10109"/>
<dbReference type="OMA" id="YILSEPW"/>
<dbReference type="Reactome" id="R-SPO-9668328">
    <property type="pathway name" value="Sealing of the nuclear envelope (NE) by ESCRT-III"/>
</dbReference>
<dbReference type="PRO" id="PR:Q10109"/>
<dbReference type="Proteomes" id="UP000002485">
    <property type="component" value="Chromosome I"/>
</dbReference>
<dbReference type="GO" id="GO:0061638">
    <property type="term" value="C:CENP-A containing chromatin"/>
    <property type="evidence" value="ECO:0000314"/>
    <property type="project" value="PomBase"/>
</dbReference>
<dbReference type="GO" id="GO:0034506">
    <property type="term" value="C:chromosome, centromeric core domain"/>
    <property type="evidence" value="ECO:0000314"/>
    <property type="project" value="CACAO"/>
</dbReference>
<dbReference type="GO" id="GO:0099115">
    <property type="term" value="C:chromosome, subtelomeric region"/>
    <property type="evidence" value="ECO:0000314"/>
    <property type="project" value="PomBase"/>
</dbReference>
<dbReference type="GO" id="GO:0140599">
    <property type="term" value="C:mitotic nuclear bridge midzone membrane domain"/>
    <property type="evidence" value="ECO:0000314"/>
    <property type="project" value="PomBase"/>
</dbReference>
<dbReference type="GO" id="GO:0044732">
    <property type="term" value="C:mitotic spindle pole body"/>
    <property type="evidence" value="ECO:0000314"/>
    <property type="project" value="PomBase"/>
</dbReference>
<dbReference type="GO" id="GO:0005635">
    <property type="term" value="C:nuclear envelope"/>
    <property type="evidence" value="ECO:0000314"/>
    <property type="project" value="PomBase"/>
</dbReference>
<dbReference type="GO" id="GO:0005637">
    <property type="term" value="C:nuclear inner membrane"/>
    <property type="evidence" value="ECO:0000314"/>
    <property type="project" value="PomBase"/>
</dbReference>
<dbReference type="GO" id="GO:0031965">
    <property type="term" value="C:nuclear membrane"/>
    <property type="evidence" value="ECO:0000269"/>
    <property type="project" value="PomBase"/>
</dbReference>
<dbReference type="GO" id="GO:0034399">
    <property type="term" value="C:nuclear periphery"/>
    <property type="evidence" value="ECO:0000318"/>
    <property type="project" value="GO_Central"/>
</dbReference>
<dbReference type="GO" id="GO:0005721">
    <property type="term" value="C:pericentric heterochromatin"/>
    <property type="evidence" value="ECO:0000314"/>
    <property type="project" value="PomBase"/>
</dbReference>
<dbReference type="GO" id="GO:0033553">
    <property type="term" value="C:rDNA heterochromatin"/>
    <property type="evidence" value="ECO:0000314"/>
    <property type="project" value="PomBase"/>
</dbReference>
<dbReference type="GO" id="GO:0140449">
    <property type="term" value="F:centromere-nuclear envelope anchor activity"/>
    <property type="evidence" value="ECO:0000314"/>
    <property type="project" value="PomBase"/>
</dbReference>
<dbReference type="GO" id="GO:0019237">
    <property type="term" value="F:centromeric DNA binding"/>
    <property type="evidence" value="ECO:0000269"/>
    <property type="project" value="PomBase"/>
</dbReference>
<dbReference type="GO" id="GO:0003682">
    <property type="term" value="F:chromatin binding"/>
    <property type="evidence" value="ECO:0000314"/>
    <property type="project" value="PomBase"/>
</dbReference>
<dbReference type="GO" id="GO:0003690">
    <property type="term" value="F:double-stranded DNA binding"/>
    <property type="evidence" value="ECO:0000314"/>
    <property type="project" value="PomBase"/>
</dbReference>
<dbReference type="GO" id="GO:0062239">
    <property type="term" value="F:heterochromatin-nuclear membrane anchor activity"/>
    <property type="evidence" value="ECO:0000314"/>
    <property type="project" value="PomBase"/>
</dbReference>
<dbReference type="GO" id="GO:0140698">
    <property type="term" value="P:attachment of telomeric heterochromatin to nuclear envelope"/>
    <property type="evidence" value="ECO:0000315"/>
    <property type="project" value="PomBase"/>
</dbReference>
<dbReference type="GO" id="GO:0072766">
    <property type="term" value="P:centromere clustering at the mitotic interphase nuclear envelope"/>
    <property type="evidence" value="ECO:0000315"/>
    <property type="project" value="PomBase"/>
</dbReference>
<dbReference type="GO" id="GO:0070828">
    <property type="term" value="P:heterochromatin organization"/>
    <property type="evidence" value="ECO:0000269"/>
    <property type="project" value="PomBase"/>
</dbReference>
<dbReference type="GO" id="GO:0051321">
    <property type="term" value="P:meiotic cell cycle"/>
    <property type="evidence" value="ECO:0007669"/>
    <property type="project" value="UniProtKB-KW"/>
</dbReference>
<dbReference type="GO" id="GO:0007084">
    <property type="term" value="P:mitotic nuclear membrane reassembly"/>
    <property type="evidence" value="ECO:0000315"/>
    <property type="project" value="PomBase"/>
</dbReference>
<dbReference type="GO" id="GO:0071765">
    <property type="term" value="P:nuclear inner membrane organization"/>
    <property type="evidence" value="ECO:0000316"/>
    <property type="project" value="PomBase"/>
</dbReference>
<dbReference type="GO" id="GO:0071763">
    <property type="term" value="P:nuclear membrane organization"/>
    <property type="evidence" value="ECO:0000315"/>
    <property type="project" value="PomBase"/>
</dbReference>
<dbReference type="GO" id="GO:0140462">
    <property type="term" value="P:pericentric heterochromatin organization"/>
    <property type="evidence" value="ECO:0000315"/>
    <property type="project" value="PomBase"/>
</dbReference>
<dbReference type="GO" id="GO:0097355">
    <property type="term" value="P:protein localization to heterochromatin"/>
    <property type="evidence" value="ECO:0000315"/>
    <property type="project" value="CACAO"/>
</dbReference>
<dbReference type="GO" id="GO:0140464">
    <property type="term" value="P:subnuclear spatial organization of silent mating-type cassette heterochromatin"/>
    <property type="evidence" value="ECO:0000315"/>
    <property type="project" value="PomBase"/>
</dbReference>
<dbReference type="CDD" id="cd12935">
    <property type="entry name" value="LEM_like"/>
    <property type="match status" value="1"/>
</dbReference>
<dbReference type="Gene3D" id="1.10.10.1180">
    <property type="entry name" value="MAN1, winged-helix domain"/>
    <property type="match status" value="1"/>
</dbReference>
<dbReference type="InterPro" id="IPR025856">
    <property type="entry name" value="HeH/LEM_domain"/>
</dbReference>
<dbReference type="InterPro" id="IPR044780">
    <property type="entry name" value="Heh2/Src1"/>
</dbReference>
<dbReference type="InterPro" id="IPR018996">
    <property type="entry name" value="Man1/Src1-like_C"/>
</dbReference>
<dbReference type="InterPro" id="IPR041885">
    <property type="entry name" value="MAN1_winged_helix_dom"/>
</dbReference>
<dbReference type="PANTHER" id="PTHR47808">
    <property type="entry name" value="INNER NUCLEAR MEMBRANE PROTEIN HEH2-RELATED"/>
    <property type="match status" value="1"/>
</dbReference>
<dbReference type="PANTHER" id="PTHR47808:SF2">
    <property type="entry name" value="LEM DOMAIN-CONTAINING PROTEIN 2"/>
    <property type="match status" value="1"/>
</dbReference>
<dbReference type="Pfam" id="PF12949">
    <property type="entry name" value="HeH"/>
    <property type="match status" value="1"/>
</dbReference>
<dbReference type="Pfam" id="PF09402">
    <property type="entry name" value="MSC"/>
    <property type="match status" value="1"/>
</dbReference>
<comment type="function">
    <text evidence="6 7">Nucleus inner membrane protein involved in meiosis (PubMed:20404563). Plays a role in regulating nuclear envelope (NE) morphology and nuclear integrity, particularly during spindle pole body (SPB) extrusion or insertion through the NE, and perhaps during karyokinesis (PubMed:28242692).</text>
</comment>
<comment type="subcellular location">
    <subcellularLocation>
        <location evidence="3 5">Nucleus inner membrane</location>
        <topology evidence="3 5">Multi-pass membrane protein</topology>
    </subcellularLocation>
</comment>
<comment type="disruption phenotype">
    <text evidence="5 7">Modest growth deficit (PubMed:28242692). Suppresses slow growth rates of spores and severe nuclear envelope (NE) morphology defects of vps4 mutants (PubMed:18692466).</text>
</comment>
<evidence type="ECO:0000255" key="1"/>
<evidence type="ECO:0000256" key="2">
    <source>
        <dbReference type="SAM" id="MobiDB-lite"/>
    </source>
</evidence>
<evidence type="ECO:0000269" key="3">
    <source>
    </source>
</evidence>
<evidence type="ECO:0000269" key="4">
    <source>
    </source>
</evidence>
<evidence type="ECO:0000269" key="5">
    <source>
    </source>
</evidence>
<evidence type="ECO:0000269" key="6">
    <source>
    </source>
</evidence>
<evidence type="ECO:0000269" key="7">
    <source>
    </source>
</evidence>
<evidence type="ECO:0007829" key="8">
    <source>
        <dbReference type="PDB" id="5YCA"/>
    </source>
</evidence>
<sequence>MDNWEDPNFELRNLRVIDLKKILHESGVSFPVNARKIEYIRMVDRIRKNKLSSGPQHLLSHLQKEENSNTSKASSSEDEIAPKYLYPSSPSKSTKKPHNETEPLLSPQFIDKPSNIETPVKIESPHVSQNNTFQSYSELSPNVETSLTMKTPPAHASTPKFRSHKSHRVAVPMSFMDSSALHTSPAFSERLKLLSSSNNFSPQLRSPKISHRLQTSATSSPLQHKRPFTNVPERVSRDIEFAPLDSARPSESSSPYSEVDSAEEDDELFQNYVLQQTRKESKLWSFIKKVFHDIKYANYRLLHNLRAFPGISAISSSYLVHIFMILLGVVAAIFLALLREKMFTAGFCDSGASGSSASILGISFPSLCRTCPPNAICPSPNYVECKPGYVLYEPWYSSLGFWPSKYCVSDTSREESVNIFREECLSVLRSWNAILHCSNNSSDLLERNMSYNAHPYVADNLNISSDHISFPSKPFALGLLHDTLLERKSPTLGLEMFEDLFKASLAVLSETNEVVMDSKLICYDSWAGIPLRCRLKQQLIKFVWRNKVFLFGILALSGVIFKLINFFRTRSIVAKYLPSASRFCVESLKRQKANYQMSRSQEPVIPLIEMHDILFHGNGPLEQIHMTKATARTLWEAIVERVEQVGSVRTRESEVDGEWTRVWEWVGTNTLDFQTDRSFINTTSPLRE</sequence>
<feature type="chain" id="PRO_0000116460" description="Lap-Emerin-Man domain protein 2">
    <location>
        <begin position="1"/>
        <end position="688"/>
    </location>
</feature>
<feature type="transmembrane region" description="Helical" evidence="1">
    <location>
        <begin position="318"/>
        <end position="338"/>
    </location>
</feature>
<feature type="transmembrane region" description="Helical" evidence="1">
    <location>
        <begin position="547"/>
        <end position="567"/>
    </location>
</feature>
<feature type="region of interest" description="Disordered" evidence="2">
    <location>
        <begin position="62"/>
        <end position="113"/>
    </location>
</feature>
<feature type="region of interest" description="Disordered" evidence="2">
    <location>
        <begin position="202"/>
        <end position="227"/>
    </location>
</feature>
<feature type="compositionally biased region" description="Low complexity" evidence="2">
    <location>
        <begin position="82"/>
        <end position="92"/>
    </location>
</feature>
<feature type="compositionally biased region" description="Polar residues" evidence="2">
    <location>
        <begin position="212"/>
        <end position="222"/>
    </location>
</feature>
<feature type="modified residue" description="Phosphothreonine" evidence="4">
    <location>
        <position position="683"/>
    </location>
</feature>
<feature type="modified residue" description="Phosphoserine" evidence="4">
    <location>
        <position position="684"/>
    </location>
</feature>
<feature type="helix" evidence="8">
    <location>
        <begin position="261"/>
        <end position="273"/>
    </location>
</feature>
<gene>
    <name type="primary">lem2</name>
    <name type="synonym">heh1</name>
    <name type="ORF">SPAC18G6.10</name>
</gene>
<name>LEM2_SCHPO</name>
<organism>
    <name type="scientific">Schizosaccharomyces pombe (strain 972 / ATCC 24843)</name>
    <name type="common">Fission yeast</name>
    <dbReference type="NCBI Taxonomy" id="284812"/>
    <lineage>
        <taxon>Eukaryota</taxon>
        <taxon>Fungi</taxon>
        <taxon>Dikarya</taxon>
        <taxon>Ascomycota</taxon>
        <taxon>Taphrinomycotina</taxon>
        <taxon>Schizosaccharomycetes</taxon>
        <taxon>Schizosaccharomycetales</taxon>
        <taxon>Schizosaccharomycetaceae</taxon>
        <taxon>Schizosaccharomyces</taxon>
    </lineage>
</organism>
<accession>Q10109</accession>